<sequence>MTDYKATLNLPETAFPMKAGLPQREPETLKFWNDIGLYQKLRAIGGDRPKFVLHDGPPYANGSIHIGHAVNKILKDIIVRSKTLAGYDAPYVPGWDCHGLPIEHKVETTHGKNLPADKTRELCREYAAEQIEGQKADFIRLGVLGEWDNPYKTMNFANEANEIRALAEMVKQDFVFKGLKPVNWCFDCGSALAEAEVEYADKKSPTIDVGFPVADADKLAAAFGLAALDKPAQIVIWTTTPWTIPANQALNVHPEIDYALVDAGDRYLVLAEALVESCLARYQREGKVVATAKGEALELINFRHPFYERLSPVYLADYVALDAGTGIVHSSPAYGEDDFYTCKRYGMSNDDILSPVQSNGVYVDSLPFFGGQFIWKANPNVVAKLEEVGSLLAHETINHSYMHCWRHKTPLIYRATAQWFVGMDKQPRQGASLRERALEAITQTEFVPGWGQARLHGMIAGRPDWCISRQRNWGVPIPFFLHKASGELHPRTVELMEEVAQRVEKEGIEAWFKLDAAELLGEEAAQYEKINDTLDVWFDSGTTHWHVLRGSHRIGHASGPVADLYLEGSDQHRGWFHSSLLTGCAIDNHAPYRQLLTHGFTVDESGRKMSKSLGNTVVPQTVIDTLGADILRLWVASTDYSGEIAVSQQILQRSADAYRRIRNTTRFLLSNLNGFDPATDLLPPQEMLALDRWAVDRALLLQREIEEAYREYRFWNVYSKVHNFCVQELGGFYLDIIKDRQYTTGANSVARRSCQTALFHIAEALVRWIAPILAFTAEEVWKFLPGERAESVMLATWYDGLNELPADVTLNRQYWEQVMAVKAAVNKELENQRAAKAVGGNLQAEVTLYAEDALQAQLAKLGNELRFVLITSTATLAPLSAAPADAVDSEVAGLKLKVVKSTHAKCGRCWHHREDVGQHAAHPDLCGRCIENIEGSGEVRHYA</sequence>
<dbReference type="EC" id="6.1.1.5" evidence="1"/>
<dbReference type="EMBL" id="AE004091">
    <property type="protein sequence ID" value="AAG07948.1"/>
    <property type="molecule type" value="Genomic_DNA"/>
</dbReference>
<dbReference type="PIR" id="B83077">
    <property type="entry name" value="B83077"/>
</dbReference>
<dbReference type="RefSeq" id="NP_253250.1">
    <property type="nucleotide sequence ID" value="NC_002516.2"/>
</dbReference>
<dbReference type="RefSeq" id="WP_003112822.1">
    <property type="nucleotide sequence ID" value="NZ_QZGE01000004.1"/>
</dbReference>
<dbReference type="SMR" id="Q9HVM4"/>
<dbReference type="FunCoup" id="Q9HVM4">
    <property type="interactions" value="678"/>
</dbReference>
<dbReference type="STRING" id="208964.PA4560"/>
<dbReference type="PaxDb" id="208964-PA4560"/>
<dbReference type="GeneID" id="878194"/>
<dbReference type="KEGG" id="pae:PA4560"/>
<dbReference type="PATRIC" id="fig|208964.12.peg.4772"/>
<dbReference type="PseudoCAP" id="PA4560"/>
<dbReference type="HOGENOM" id="CLU_001493_7_1_6"/>
<dbReference type="InParanoid" id="Q9HVM4"/>
<dbReference type="OrthoDB" id="9810365at2"/>
<dbReference type="PhylomeDB" id="Q9HVM4"/>
<dbReference type="BioCyc" id="PAER208964:G1FZ6-4653-MONOMER"/>
<dbReference type="Proteomes" id="UP000002438">
    <property type="component" value="Chromosome"/>
</dbReference>
<dbReference type="GO" id="GO:0005829">
    <property type="term" value="C:cytosol"/>
    <property type="evidence" value="ECO:0000318"/>
    <property type="project" value="GO_Central"/>
</dbReference>
<dbReference type="GO" id="GO:0002161">
    <property type="term" value="F:aminoacyl-tRNA deacylase activity"/>
    <property type="evidence" value="ECO:0007669"/>
    <property type="project" value="InterPro"/>
</dbReference>
<dbReference type="GO" id="GO:0005524">
    <property type="term" value="F:ATP binding"/>
    <property type="evidence" value="ECO:0007669"/>
    <property type="project" value="UniProtKB-UniRule"/>
</dbReference>
<dbReference type="GO" id="GO:0004822">
    <property type="term" value="F:isoleucine-tRNA ligase activity"/>
    <property type="evidence" value="ECO:0000318"/>
    <property type="project" value="GO_Central"/>
</dbReference>
<dbReference type="GO" id="GO:0000049">
    <property type="term" value="F:tRNA binding"/>
    <property type="evidence" value="ECO:0007669"/>
    <property type="project" value="InterPro"/>
</dbReference>
<dbReference type="GO" id="GO:0008270">
    <property type="term" value="F:zinc ion binding"/>
    <property type="evidence" value="ECO:0007669"/>
    <property type="project" value="UniProtKB-UniRule"/>
</dbReference>
<dbReference type="GO" id="GO:0006428">
    <property type="term" value="P:isoleucyl-tRNA aminoacylation"/>
    <property type="evidence" value="ECO:0000318"/>
    <property type="project" value="GO_Central"/>
</dbReference>
<dbReference type="CDD" id="cd07960">
    <property type="entry name" value="Anticodon_Ia_Ile_BEm"/>
    <property type="match status" value="1"/>
</dbReference>
<dbReference type="CDD" id="cd00818">
    <property type="entry name" value="IleRS_core"/>
    <property type="match status" value="1"/>
</dbReference>
<dbReference type="FunFam" id="1.10.730.20:FF:000001">
    <property type="entry name" value="Isoleucine--tRNA ligase"/>
    <property type="match status" value="1"/>
</dbReference>
<dbReference type="FunFam" id="3.40.50.620:FF:000042">
    <property type="entry name" value="Isoleucine--tRNA ligase"/>
    <property type="match status" value="1"/>
</dbReference>
<dbReference type="FunFam" id="3.40.50.620:FF:000048">
    <property type="entry name" value="Isoleucine--tRNA ligase"/>
    <property type="match status" value="1"/>
</dbReference>
<dbReference type="Gene3D" id="1.10.730.20">
    <property type="match status" value="1"/>
</dbReference>
<dbReference type="Gene3D" id="3.40.50.620">
    <property type="entry name" value="HUPs"/>
    <property type="match status" value="2"/>
</dbReference>
<dbReference type="Gene3D" id="1.10.10.830">
    <property type="entry name" value="Ile-tRNA synthetase CP2 domain-like"/>
    <property type="match status" value="1"/>
</dbReference>
<dbReference type="HAMAP" id="MF_02002">
    <property type="entry name" value="Ile_tRNA_synth_type1"/>
    <property type="match status" value="1"/>
</dbReference>
<dbReference type="InterPro" id="IPR001412">
    <property type="entry name" value="aa-tRNA-synth_I_CS"/>
</dbReference>
<dbReference type="InterPro" id="IPR002300">
    <property type="entry name" value="aa-tRNA-synth_Ia"/>
</dbReference>
<dbReference type="InterPro" id="IPR033708">
    <property type="entry name" value="Anticodon_Ile_BEm"/>
</dbReference>
<dbReference type="InterPro" id="IPR002301">
    <property type="entry name" value="Ile-tRNA-ligase"/>
</dbReference>
<dbReference type="InterPro" id="IPR023585">
    <property type="entry name" value="Ile-tRNA-ligase_type1"/>
</dbReference>
<dbReference type="InterPro" id="IPR050081">
    <property type="entry name" value="Ile-tRNA_ligase"/>
</dbReference>
<dbReference type="InterPro" id="IPR013155">
    <property type="entry name" value="M/V/L/I-tRNA-synth_anticd-bd"/>
</dbReference>
<dbReference type="InterPro" id="IPR014729">
    <property type="entry name" value="Rossmann-like_a/b/a_fold"/>
</dbReference>
<dbReference type="InterPro" id="IPR009080">
    <property type="entry name" value="tRNAsynth_Ia_anticodon-bd"/>
</dbReference>
<dbReference type="InterPro" id="IPR009008">
    <property type="entry name" value="Val/Leu/Ile-tRNA-synth_edit"/>
</dbReference>
<dbReference type="InterPro" id="IPR010663">
    <property type="entry name" value="Znf_FPG/IleRS"/>
</dbReference>
<dbReference type="NCBIfam" id="TIGR00392">
    <property type="entry name" value="ileS"/>
    <property type="match status" value="1"/>
</dbReference>
<dbReference type="PANTHER" id="PTHR42765:SF1">
    <property type="entry name" value="ISOLEUCINE--TRNA LIGASE, MITOCHONDRIAL"/>
    <property type="match status" value="1"/>
</dbReference>
<dbReference type="PANTHER" id="PTHR42765">
    <property type="entry name" value="SOLEUCYL-TRNA SYNTHETASE"/>
    <property type="match status" value="1"/>
</dbReference>
<dbReference type="Pfam" id="PF08264">
    <property type="entry name" value="Anticodon_1"/>
    <property type="match status" value="1"/>
</dbReference>
<dbReference type="Pfam" id="PF00133">
    <property type="entry name" value="tRNA-synt_1"/>
    <property type="match status" value="1"/>
</dbReference>
<dbReference type="Pfam" id="PF06827">
    <property type="entry name" value="zf-FPG_IleRS"/>
    <property type="match status" value="1"/>
</dbReference>
<dbReference type="PRINTS" id="PR00984">
    <property type="entry name" value="TRNASYNTHILE"/>
</dbReference>
<dbReference type="SUPFAM" id="SSF47323">
    <property type="entry name" value="Anticodon-binding domain of a subclass of class I aminoacyl-tRNA synthetases"/>
    <property type="match status" value="1"/>
</dbReference>
<dbReference type="SUPFAM" id="SSF52374">
    <property type="entry name" value="Nucleotidylyl transferase"/>
    <property type="match status" value="1"/>
</dbReference>
<dbReference type="SUPFAM" id="SSF50677">
    <property type="entry name" value="ValRS/IleRS/LeuRS editing domain"/>
    <property type="match status" value="1"/>
</dbReference>
<dbReference type="PROSITE" id="PS00178">
    <property type="entry name" value="AA_TRNA_LIGASE_I"/>
    <property type="match status" value="1"/>
</dbReference>
<organism>
    <name type="scientific">Pseudomonas aeruginosa (strain ATCC 15692 / DSM 22644 / CIP 104116 / JCM 14847 / LMG 12228 / 1C / PRS 101 / PAO1)</name>
    <dbReference type="NCBI Taxonomy" id="208964"/>
    <lineage>
        <taxon>Bacteria</taxon>
        <taxon>Pseudomonadati</taxon>
        <taxon>Pseudomonadota</taxon>
        <taxon>Gammaproteobacteria</taxon>
        <taxon>Pseudomonadales</taxon>
        <taxon>Pseudomonadaceae</taxon>
        <taxon>Pseudomonas</taxon>
    </lineage>
</organism>
<evidence type="ECO:0000255" key="1">
    <source>
        <dbReference type="HAMAP-Rule" id="MF_02002"/>
    </source>
</evidence>
<reference key="1">
    <citation type="journal article" date="2000" name="Nature">
        <title>Complete genome sequence of Pseudomonas aeruginosa PAO1, an opportunistic pathogen.</title>
        <authorList>
            <person name="Stover C.K."/>
            <person name="Pham X.-Q.T."/>
            <person name="Erwin A.L."/>
            <person name="Mizoguchi S.D."/>
            <person name="Warrener P."/>
            <person name="Hickey M.J."/>
            <person name="Brinkman F.S.L."/>
            <person name="Hufnagle W.O."/>
            <person name="Kowalik D.J."/>
            <person name="Lagrou M."/>
            <person name="Garber R.L."/>
            <person name="Goltry L."/>
            <person name="Tolentino E."/>
            <person name="Westbrock-Wadman S."/>
            <person name="Yuan Y."/>
            <person name="Brody L.L."/>
            <person name="Coulter S.N."/>
            <person name="Folger K.R."/>
            <person name="Kas A."/>
            <person name="Larbig K."/>
            <person name="Lim R.M."/>
            <person name="Smith K.A."/>
            <person name="Spencer D.H."/>
            <person name="Wong G.K.-S."/>
            <person name="Wu Z."/>
            <person name="Paulsen I.T."/>
            <person name="Reizer J."/>
            <person name="Saier M.H. Jr."/>
            <person name="Hancock R.E.W."/>
            <person name="Lory S."/>
            <person name="Olson M.V."/>
        </authorList>
    </citation>
    <scope>NUCLEOTIDE SEQUENCE [LARGE SCALE GENOMIC DNA]</scope>
    <source>
        <strain>ATCC 15692 / DSM 22644 / CIP 104116 / JCM 14847 / LMG 12228 / 1C / PRS 101 / PAO1</strain>
    </source>
</reference>
<name>SYI_PSEAE</name>
<proteinExistence type="inferred from homology"/>
<keyword id="KW-0030">Aminoacyl-tRNA synthetase</keyword>
<keyword id="KW-0067">ATP-binding</keyword>
<keyword id="KW-0963">Cytoplasm</keyword>
<keyword id="KW-0436">Ligase</keyword>
<keyword id="KW-0479">Metal-binding</keyword>
<keyword id="KW-0547">Nucleotide-binding</keyword>
<keyword id="KW-0648">Protein biosynthesis</keyword>
<keyword id="KW-1185">Reference proteome</keyword>
<keyword id="KW-0862">Zinc</keyword>
<accession>Q9HVM4</accession>
<gene>
    <name evidence="1" type="primary">ileS</name>
    <name type="ordered locus">PA4560</name>
</gene>
<protein>
    <recommendedName>
        <fullName evidence="1">Isoleucine--tRNA ligase</fullName>
        <ecNumber evidence="1">6.1.1.5</ecNumber>
    </recommendedName>
    <alternativeName>
        <fullName evidence="1">Isoleucyl-tRNA synthetase</fullName>
        <shortName evidence="1">IleRS</shortName>
    </alternativeName>
</protein>
<feature type="chain" id="PRO_0000098444" description="Isoleucine--tRNA ligase">
    <location>
        <begin position="1"/>
        <end position="943"/>
    </location>
</feature>
<feature type="short sequence motif" description="'HIGH' region">
    <location>
        <begin position="58"/>
        <end position="68"/>
    </location>
</feature>
<feature type="short sequence motif" description="'KMSKS' region">
    <location>
        <begin position="608"/>
        <end position="612"/>
    </location>
</feature>
<feature type="binding site" evidence="1">
    <location>
        <position position="567"/>
    </location>
    <ligand>
        <name>L-isoleucyl-5'-AMP</name>
        <dbReference type="ChEBI" id="CHEBI:178002"/>
    </ligand>
</feature>
<feature type="binding site" evidence="1">
    <location>
        <position position="611"/>
    </location>
    <ligand>
        <name>ATP</name>
        <dbReference type="ChEBI" id="CHEBI:30616"/>
    </ligand>
</feature>
<feature type="binding site" evidence="1">
    <location>
        <position position="906"/>
    </location>
    <ligand>
        <name>Zn(2+)</name>
        <dbReference type="ChEBI" id="CHEBI:29105"/>
    </ligand>
</feature>
<feature type="binding site" evidence="1">
    <location>
        <position position="909"/>
    </location>
    <ligand>
        <name>Zn(2+)</name>
        <dbReference type="ChEBI" id="CHEBI:29105"/>
    </ligand>
</feature>
<feature type="binding site" evidence="1">
    <location>
        <position position="926"/>
    </location>
    <ligand>
        <name>Zn(2+)</name>
        <dbReference type="ChEBI" id="CHEBI:29105"/>
    </ligand>
</feature>
<feature type="binding site" evidence="1">
    <location>
        <position position="929"/>
    </location>
    <ligand>
        <name>Zn(2+)</name>
        <dbReference type="ChEBI" id="CHEBI:29105"/>
    </ligand>
</feature>
<comment type="function">
    <text evidence="1">Catalyzes the attachment of isoleucine to tRNA(Ile). As IleRS can inadvertently accommodate and process structurally similar amino acids such as valine, to avoid such errors it has two additional distinct tRNA(Ile)-dependent editing activities. One activity is designated as 'pretransfer' editing and involves the hydrolysis of activated Val-AMP. The other activity is designated 'posttransfer' editing and involves deacylation of mischarged Val-tRNA(Ile).</text>
</comment>
<comment type="catalytic activity">
    <reaction evidence="1">
        <text>tRNA(Ile) + L-isoleucine + ATP = L-isoleucyl-tRNA(Ile) + AMP + diphosphate</text>
        <dbReference type="Rhea" id="RHEA:11060"/>
        <dbReference type="Rhea" id="RHEA-COMP:9666"/>
        <dbReference type="Rhea" id="RHEA-COMP:9695"/>
        <dbReference type="ChEBI" id="CHEBI:30616"/>
        <dbReference type="ChEBI" id="CHEBI:33019"/>
        <dbReference type="ChEBI" id="CHEBI:58045"/>
        <dbReference type="ChEBI" id="CHEBI:78442"/>
        <dbReference type="ChEBI" id="CHEBI:78528"/>
        <dbReference type="ChEBI" id="CHEBI:456215"/>
        <dbReference type="EC" id="6.1.1.5"/>
    </reaction>
</comment>
<comment type="cofactor">
    <cofactor evidence="1">
        <name>Zn(2+)</name>
        <dbReference type="ChEBI" id="CHEBI:29105"/>
    </cofactor>
    <text evidence="1">Binds 1 zinc ion per subunit.</text>
</comment>
<comment type="subunit">
    <text evidence="1">Monomer.</text>
</comment>
<comment type="subcellular location">
    <subcellularLocation>
        <location evidence="1">Cytoplasm</location>
    </subcellularLocation>
</comment>
<comment type="domain">
    <text evidence="1">IleRS has two distinct active sites: one for aminoacylation and one for editing. The misactivated valine is translocated from the active site to the editing site, which sterically excludes the correctly activated isoleucine. The single editing site contains two valyl binding pockets, one specific for each substrate (Val-AMP or Val-tRNA(Ile)).</text>
</comment>
<comment type="similarity">
    <text evidence="1">Belongs to the class-I aminoacyl-tRNA synthetase family. IleS type 1 subfamily.</text>
</comment>